<proteinExistence type="evidence at protein level"/>
<reference key="1">
    <citation type="journal article" date="2005" name="Nature">
        <title>DNA sequence and analysis of human chromosome 18.</title>
        <authorList>
            <person name="Nusbaum C."/>
            <person name="Zody M.C."/>
            <person name="Borowsky M.L."/>
            <person name="Kamal M."/>
            <person name="Kodira C.D."/>
            <person name="Taylor T.D."/>
            <person name="Whittaker C.A."/>
            <person name="Chang J.L."/>
            <person name="Cuomo C.A."/>
            <person name="Dewar K."/>
            <person name="FitzGerald M.G."/>
            <person name="Yang X."/>
            <person name="Abouelleil A."/>
            <person name="Allen N.R."/>
            <person name="Anderson S."/>
            <person name="Bloom T."/>
            <person name="Bugalter B."/>
            <person name="Butler J."/>
            <person name="Cook A."/>
            <person name="DeCaprio D."/>
            <person name="Engels R."/>
            <person name="Garber M."/>
            <person name="Gnirke A."/>
            <person name="Hafez N."/>
            <person name="Hall J.L."/>
            <person name="Norman C.H."/>
            <person name="Itoh T."/>
            <person name="Jaffe D.B."/>
            <person name="Kuroki Y."/>
            <person name="Lehoczky J."/>
            <person name="Lui A."/>
            <person name="Macdonald P."/>
            <person name="Mauceli E."/>
            <person name="Mikkelsen T.S."/>
            <person name="Naylor J.W."/>
            <person name="Nicol R."/>
            <person name="Nguyen C."/>
            <person name="Noguchi H."/>
            <person name="O'Leary S.B."/>
            <person name="Piqani B."/>
            <person name="Smith C.L."/>
            <person name="Talamas J.A."/>
            <person name="Topham K."/>
            <person name="Totoki Y."/>
            <person name="Toyoda A."/>
            <person name="Wain H.M."/>
            <person name="Young S.K."/>
            <person name="Zeng Q."/>
            <person name="Zimmer A.R."/>
            <person name="Fujiyama A."/>
            <person name="Hattori M."/>
            <person name="Birren B.W."/>
            <person name="Sakaki Y."/>
            <person name="Lander E.S."/>
        </authorList>
    </citation>
    <scope>NUCLEOTIDE SEQUENCE [LARGE SCALE GENOMIC DNA]</scope>
</reference>
<reference key="2">
    <citation type="submission" date="2005-09" db="EMBL/GenBank/DDBJ databases">
        <authorList>
            <person name="Mural R.J."/>
            <person name="Istrail S."/>
            <person name="Sutton G.G."/>
            <person name="Florea L."/>
            <person name="Halpern A.L."/>
            <person name="Mobarry C.M."/>
            <person name="Lippert R."/>
            <person name="Walenz B."/>
            <person name="Shatkay H."/>
            <person name="Dew I."/>
            <person name="Miller J.R."/>
            <person name="Flanigan M.J."/>
            <person name="Edwards N.J."/>
            <person name="Bolanos R."/>
            <person name="Fasulo D."/>
            <person name="Halldorsson B.V."/>
            <person name="Hannenhalli S."/>
            <person name="Turner R."/>
            <person name="Yooseph S."/>
            <person name="Lu F."/>
            <person name="Nusskern D.R."/>
            <person name="Shue B.C."/>
            <person name="Zheng X.H."/>
            <person name="Zhong F."/>
            <person name="Delcher A.L."/>
            <person name="Huson D.H."/>
            <person name="Kravitz S.A."/>
            <person name="Mouchard L."/>
            <person name="Reinert K."/>
            <person name="Remington K.A."/>
            <person name="Clark A.G."/>
            <person name="Waterman M.S."/>
            <person name="Eichler E.E."/>
            <person name="Adams M.D."/>
            <person name="Hunkapiller M.W."/>
            <person name="Myers E.W."/>
            <person name="Venter J.C."/>
        </authorList>
    </citation>
    <scope>NUCLEOTIDE SEQUENCE [LARGE SCALE GENOMIC DNA]</scope>
</reference>
<reference key="3">
    <citation type="journal article" date="2004" name="Genome Res.">
        <title>The status, quality, and expansion of the NIH full-length cDNA project: the Mammalian Gene Collection (MGC).</title>
        <authorList>
            <consortium name="The MGC Project Team"/>
        </authorList>
    </citation>
    <scope>NUCLEOTIDE SEQUENCE [LARGE SCALE MRNA]</scope>
    <scope>VARIANTS LYS-310 AND LEU-468</scope>
    <source>
        <tissue>Brain</tissue>
        <tissue>Lung</tissue>
        <tissue>Testis</tissue>
    </source>
</reference>
<reference key="4">
    <citation type="journal article" date="2004" name="Nat. Genet.">
        <title>Complete sequencing and characterization of 21,243 full-length human cDNAs.</title>
        <authorList>
            <person name="Ota T."/>
            <person name="Suzuki Y."/>
            <person name="Nishikawa T."/>
            <person name="Otsuki T."/>
            <person name="Sugiyama T."/>
            <person name="Irie R."/>
            <person name="Wakamatsu A."/>
            <person name="Hayashi K."/>
            <person name="Sato H."/>
            <person name="Nagai K."/>
            <person name="Kimura K."/>
            <person name="Makita H."/>
            <person name="Sekine M."/>
            <person name="Obayashi M."/>
            <person name="Nishi T."/>
            <person name="Shibahara T."/>
            <person name="Tanaka T."/>
            <person name="Ishii S."/>
            <person name="Yamamoto J."/>
            <person name="Saito K."/>
            <person name="Kawai Y."/>
            <person name="Isono Y."/>
            <person name="Nakamura Y."/>
            <person name="Nagahari K."/>
            <person name="Murakami K."/>
            <person name="Yasuda T."/>
            <person name="Iwayanagi T."/>
            <person name="Wagatsuma M."/>
            <person name="Shiratori A."/>
            <person name="Sudo H."/>
            <person name="Hosoiri T."/>
            <person name="Kaku Y."/>
            <person name="Kodaira H."/>
            <person name="Kondo H."/>
            <person name="Sugawara M."/>
            <person name="Takahashi M."/>
            <person name="Kanda K."/>
            <person name="Yokoi T."/>
            <person name="Furuya T."/>
            <person name="Kikkawa E."/>
            <person name="Omura Y."/>
            <person name="Abe K."/>
            <person name="Kamihara K."/>
            <person name="Katsuta N."/>
            <person name="Sato K."/>
            <person name="Tanikawa M."/>
            <person name="Yamazaki M."/>
            <person name="Ninomiya K."/>
            <person name="Ishibashi T."/>
            <person name="Yamashita H."/>
            <person name="Murakawa K."/>
            <person name="Fujimori K."/>
            <person name="Tanai H."/>
            <person name="Kimata M."/>
            <person name="Watanabe M."/>
            <person name="Hiraoka S."/>
            <person name="Chiba Y."/>
            <person name="Ishida S."/>
            <person name="Ono Y."/>
            <person name="Takiguchi S."/>
            <person name="Watanabe S."/>
            <person name="Yosida M."/>
            <person name="Hotuta T."/>
            <person name="Kusano J."/>
            <person name="Kanehori K."/>
            <person name="Takahashi-Fujii A."/>
            <person name="Hara H."/>
            <person name="Tanase T.-O."/>
            <person name="Nomura Y."/>
            <person name="Togiya S."/>
            <person name="Komai F."/>
            <person name="Hara R."/>
            <person name="Takeuchi K."/>
            <person name="Arita M."/>
            <person name="Imose N."/>
            <person name="Musashino K."/>
            <person name="Yuuki H."/>
            <person name="Oshima A."/>
            <person name="Sasaki N."/>
            <person name="Aotsuka S."/>
            <person name="Yoshikawa Y."/>
            <person name="Matsunawa H."/>
            <person name="Ichihara T."/>
            <person name="Shiohata N."/>
            <person name="Sano S."/>
            <person name="Moriya S."/>
            <person name="Momiyama H."/>
            <person name="Satoh N."/>
            <person name="Takami S."/>
            <person name="Terashima Y."/>
            <person name="Suzuki O."/>
            <person name="Nakagawa S."/>
            <person name="Senoh A."/>
            <person name="Mizoguchi H."/>
            <person name="Goto Y."/>
            <person name="Shimizu F."/>
            <person name="Wakebe H."/>
            <person name="Hishigaki H."/>
            <person name="Watanabe T."/>
            <person name="Sugiyama A."/>
            <person name="Takemoto M."/>
            <person name="Kawakami B."/>
            <person name="Yamazaki M."/>
            <person name="Watanabe K."/>
            <person name="Kumagai A."/>
            <person name="Itakura S."/>
            <person name="Fukuzumi Y."/>
            <person name="Fujimori Y."/>
            <person name="Komiyama M."/>
            <person name="Tashiro H."/>
            <person name="Tanigami A."/>
            <person name="Fujiwara T."/>
            <person name="Ono T."/>
            <person name="Yamada K."/>
            <person name="Fujii Y."/>
            <person name="Ozaki K."/>
            <person name="Hirao M."/>
            <person name="Ohmori Y."/>
            <person name="Kawabata A."/>
            <person name="Hikiji T."/>
            <person name="Kobatake N."/>
            <person name="Inagaki H."/>
            <person name="Ikema Y."/>
            <person name="Okamoto S."/>
            <person name="Okitani R."/>
            <person name="Kawakami T."/>
            <person name="Noguchi S."/>
            <person name="Itoh T."/>
            <person name="Shigeta K."/>
            <person name="Senba T."/>
            <person name="Matsumura K."/>
            <person name="Nakajima Y."/>
            <person name="Mizuno T."/>
            <person name="Morinaga M."/>
            <person name="Sasaki M."/>
            <person name="Togashi T."/>
            <person name="Oyama M."/>
            <person name="Hata H."/>
            <person name="Watanabe M."/>
            <person name="Komatsu T."/>
            <person name="Mizushima-Sugano J."/>
            <person name="Satoh T."/>
            <person name="Shirai Y."/>
            <person name="Takahashi Y."/>
            <person name="Nakagawa K."/>
            <person name="Okumura K."/>
            <person name="Nagase T."/>
            <person name="Nomura N."/>
            <person name="Kikuchi H."/>
            <person name="Masuho Y."/>
            <person name="Yamashita R."/>
            <person name="Nakai K."/>
            <person name="Yada T."/>
            <person name="Nakamura Y."/>
            <person name="Ohara O."/>
            <person name="Isogai T."/>
            <person name="Sugano S."/>
        </authorList>
    </citation>
    <scope>NUCLEOTIDE SEQUENCE [LARGE SCALE MRNA] OF 137-472</scope>
    <scope>VARIANT LEU-468</scope>
    <source>
        <tissue>Lung</tissue>
    </source>
</reference>
<reference key="5">
    <citation type="journal article" date="2007" name="BMC Genomics">
        <title>The full-ORF clone resource of the German cDNA consortium.</title>
        <authorList>
            <person name="Bechtel S."/>
            <person name="Rosenfelder H."/>
            <person name="Duda A."/>
            <person name="Schmidt C.P."/>
            <person name="Ernst U."/>
            <person name="Wellenreuther R."/>
            <person name="Mehrle A."/>
            <person name="Schuster C."/>
            <person name="Bahr A."/>
            <person name="Bloecker H."/>
            <person name="Heubner D."/>
            <person name="Hoerlein A."/>
            <person name="Michel G."/>
            <person name="Wedler H."/>
            <person name="Koehrer K."/>
            <person name="Ottenwaelder B."/>
            <person name="Poustka A."/>
            <person name="Wiemann S."/>
            <person name="Schupp I."/>
        </authorList>
    </citation>
    <scope>NUCLEOTIDE SEQUENCE [LARGE SCALE MRNA] OF 228-472</scope>
    <scope>VARIANT LEU-468</scope>
    <source>
        <tissue>Melanoma</tissue>
    </source>
</reference>
<reference key="6">
    <citation type="journal article" date="2020" name="Cell Res.">
        <title>METTL4 is an snRNA m6Am methyltransferase that regulates RNA splicing.</title>
        <authorList>
            <person name="Chen H."/>
            <person name="Gu L."/>
            <person name="Orellana E.A."/>
            <person name="Wang Y."/>
            <person name="Guo J."/>
            <person name="Liu Q."/>
            <person name="Wang L."/>
            <person name="Shen Z."/>
            <person name="Wu H."/>
            <person name="Gregory R.I."/>
            <person name="Xing Y."/>
            <person name="Shi Y."/>
        </authorList>
    </citation>
    <scope>FUNCTION</scope>
    <scope>CATALYTIC ACTIVITY</scope>
    <scope>BIOPHYSICOCHEMICAL PROPERTIES</scope>
    <scope>SUBCELLULAR LOCATION</scope>
    <scope>MUTAGENESIS OF 287-ASP--TRP-290</scope>
</reference>
<reference key="7">
    <citation type="journal article" date="2020" name="Mol. Cell">
        <title>N6-deoxyadenosine methylation in mammalian mitochondrial DNA.</title>
        <authorList>
            <person name="Hao Z."/>
            <person name="Wu T."/>
            <person name="Cui X."/>
            <person name="Zhu P."/>
            <person name="Tan C."/>
            <person name="Dou X."/>
            <person name="Hsu K.W."/>
            <person name="Lin Y.T."/>
            <person name="Peng P.H."/>
            <person name="Zhang L.S."/>
            <person name="Gao Y."/>
            <person name="Hu L."/>
            <person name="Sun H.L."/>
            <person name="Zhu A."/>
            <person name="Liu J."/>
            <person name="Wu K.J."/>
            <person name="He C."/>
        </authorList>
    </citation>
    <scope>FUNCTION</scope>
    <scope>CATALYTIC ACTIVITY</scope>
    <scope>SUBCELLULAR LOCATION</scope>
    <scope>MUTAGENESIS OF 287-ASP--TRP-290</scope>
</reference>
<reference key="8">
    <citation type="journal article" date="2020" name="Nat. Chem. Biol.">
        <title>The origin of genomic N6-methyl-deoxyadenosine in mammalian cells.</title>
        <authorList>
            <person name="Musheev M.U."/>
            <person name="Baumgaertner A."/>
            <person name="Krebs L."/>
            <person name="Niehrs C."/>
        </authorList>
    </citation>
    <scope>FUNCTION</scope>
    <scope>CAUTION</scope>
</reference>
<reference key="9">
    <citation type="journal article" date="2011" name="Nature">
        <title>Exome sequencing identifies frequent mutation of the SWI/SNF complex gene PBRM1 in renal carcinoma.</title>
        <authorList>
            <person name="Varela I."/>
            <person name="Tarpey P."/>
            <person name="Raine K."/>
            <person name="Huang D."/>
            <person name="Ong C.K."/>
            <person name="Stephens P."/>
            <person name="Davies H."/>
            <person name="Jones D."/>
            <person name="Lin M.L."/>
            <person name="Teague J."/>
            <person name="Bignell G."/>
            <person name="Butler A."/>
            <person name="Cho J."/>
            <person name="Dalgliesh G.L."/>
            <person name="Galappaththige D."/>
            <person name="Greenman C."/>
            <person name="Hardy C."/>
            <person name="Jia M."/>
            <person name="Latimer C."/>
            <person name="Lau K.W."/>
            <person name="Marshall J."/>
            <person name="McLaren S."/>
            <person name="Menzies A."/>
            <person name="Mudie L."/>
            <person name="Stebbings L."/>
            <person name="Largaespada D.A."/>
            <person name="Wessels L.F.A."/>
            <person name="Richard S."/>
            <person name="Kahnoski R.J."/>
            <person name="Anema J."/>
            <person name="Tuveson D.A."/>
            <person name="Perez-Mancera P.A."/>
            <person name="Mustonen V."/>
            <person name="Fischer A."/>
            <person name="Adams D.J."/>
            <person name="Rust A."/>
            <person name="Chan-On W."/>
            <person name="Subimerb C."/>
            <person name="Dykema K."/>
            <person name="Furge K."/>
            <person name="Campbell P.J."/>
            <person name="Teh B.T."/>
            <person name="Stratton M.R."/>
            <person name="Futreal P.A."/>
        </authorList>
    </citation>
    <scope>VARIANT PHE-42</scope>
</reference>
<evidence type="ECO:0000250" key="1">
    <source>
        <dbReference type="UniProtKB" id="Q3U034"/>
    </source>
</evidence>
<evidence type="ECO:0000255" key="2">
    <source>
        <dbReference type="PROSITE-ProRule" id="PRU00489"/>
    </source>
</evidence>
<evidence type="ECO:0000269" key="3">
    <source>
    </source>
</evidence>
<evidence type="ECO:0000269" key="4">
    <source>
    </source>
</evidence>
<evidence type="ECO:0000269" key="5">
    <source>
    </source>
</evidence>
<evidence type="ECO:0000269" key="6">
    <source>
    </source>
</evidence>
<evidence type="ECO:0000269" key="7">
    <source>
    </source>
</evidence>
<evidence type="ECO:0000269" key="8">
    <source>
    </source>
</evidence>
<evidence type="ECO:0000269" key="9">
    <source>
    </source>
</evidence>
<evidence type="ECO:0000303" key="10">
    <source>
    </source>
</evidence>
<evidence type="ECO:0000305" key="11"/>
<evidence type="ECO:0000305" key="12">
    <source>
    </source>
</evidence>
<evidence type="ECO:0000312" key="13">
    <source>
        <dbReference type="HGNC" id="HGNC:24726"/>
    </source>
</evidence>
<dbReference type="EC" id="2.1.1.72" evidence="12"/>
<dbReference type="EC" id="2.1.1.-" evidence="7"/>
<dbReference type="EMBL" id="AP005136">
    <property type="status" value="NOT_ANNOTATED_CDS"/>
    <property type="molecule type" value="Genomic_DNA"/>
</dbReference>
<dbReference type="EMBL" id="CH471113">
    <property type="protein sequence ID" value="EAX01698.1"/>
    <property type="molecule type" value="Genomic_DNA"/>
</dbReference>
<dbReference type="EMBL" id="BC111020">
    <property type="protein sequence ID" value="AAI11021.1"/>
    <property type="molecule type" value="mRNA"/>
</dbReference>
<dbReference type="EMBL" id="BC136766">
    <property type="protein sequence ID" value="AAI36767.1"/>
    <property type="molecule type" value="mRNA"/>
</dbReference>
<dbReference type="EMBL" id="BC136767">
    <property type="protein sequence ID" value="AAI36768.1"/>
    <property type="molecule type" value="mRNA"/>
</dbReference>
<dbReference type="EMBL" id="AK026670">
    <property type="protein sequence ID" value="BAB15520.1"/>
    <property type="status" value="ALT_FRAME"/>
    <property type="molecule type" value="mRNA"/>
</dbReference>
<dbReference type="EMBL" id="AL834296">
    <property type="protein sequence ID" value="CAD38969.1"/>
    <property type="molecule type" value="mRNA"/>
</dbReference>
<dbReference type="CCDS" id="CCDS11826.1"/>
<dbReference type="RefSeq" id="NP_073751.3">
    <property type="nucleotide sequence ID" value="NM_022840.4"/>
</dbReference>
<dbReference type="SMR" id="Q8N3J2"/>
<dbReference type="BioGRID" id="122334">
    <property type="interactions" value="24"/>
</dbReference>
<dbReference type="FunCoup" id="Q8N3J2">
    <property type="interactions" value="1971"/>
</dbReference>
<dbReference type="STRING" id="9606.ENSP00000458290"/>
<dbReference type="GlyGen" id="Q8N3J2">
    <property type="glycosylation" value="1 site, 1 O-linked glycan (1 site)"/>
</dbReference>
<dbReference type="iPTMnet" id="Q8N3J2"/>
<dbReference type="PhosphoSitePlus" id="Q8N3J2"/>
<dbReference type="BioMuta" id="METTL4"/>
<dbReference type="DMDM" id="269849669"/>
<dbReference type="jPOST" id="Q8N3J2"/>
<dbReference type="MassIVE" id="Q8N3J2"/>
<dbReference type="PaxDb" id="9606-ENSP00000458290"/>
<dbReference type="PeptideAtlas" id="Q8N3J2"/>
<dbReference type="ProteomicsDB" id="71807"/>
<dbReference type="Pumba" id="Q8N3J2"/>
<dbReference type="Antibodypedia" id="21910">
    <property type="antibodies" value="115 antibodies from 24 providers"/>
</dbReference>
<dbReference type="DNASU" id="64863"/>
<dbReference type="Ensembl" id="ENST00000574538.2">
    <property type="protein sequence ID" value="ENSP00000458290.1"/>
    <property type="gene ID" value="ENSG00000101574.15"/>
</dbReference>
<dbReference type="GeneID" id="64863"/>
<dbReference type="KEGG" id="hsa:64863"/>
<dbReference type="MANE-Select" id="ENST00000574538.2">
    <property type="protein sequence ID" value="ENSP00000458290.1"/>
    <property type="RefSeq nucleotide sequence ID" value="NM_022840.5"/>
    <property type="RefSeq protein sequence ID" value="NP_073751.3"/>
</dbReference>
<dbReference type="UCSC" id="uc002klh.5">
    <property type="organism name" value="human"/>
</dbReference>
<dbReference type="AGR" id="HGNC:24726"/>
<dbReference type="CTD" id="64863"/>
<dbReference type="DisGeNET" id="64863"/>
<dbReference type="GeneCards" id="METTL4"/>
<dbReference type="HGNC" id="HGNC:24726">
    <property type="gene designation" value="METTL4"/>
</dbReference>
<dbReference type="HPA" id="ENSG00000101574">
    <property type="expression patterns" value="Low tissue specificity"/>
</dbReference>
<dbReference type="MIM" id="619626">
    <property type="type" value="gene"/>
</dbReference>
<dbReference type="neXtProt" id="NX_Q8N3J2"/>
<dbReference type="OpenTargets" id="ENSG00000101574"/>
<dbReference type="PharmGKB" id="PA134916468"/>
<dbReference type="VEuPathDB" id="HostDB:ENSG00000101574"/>
<dbReference type="eggNOG" id="KOG2356">
    <property type="taxonomic scope" value="Eukaryota"/>
</dbReference>
<dbReference type="GeneTree" id="ENSGT00390000016237"/>
<dbReference type="HOGENOM" id="CLU_027091_1_0_1"/>
<dbReference type="InParanoid" id="Q8N3J2"/>
<dbReference type="OMA" id="PLVQCGR"/>
<dbReference type="OrthoDB" id="61116at2759"/>
<dbReference type="PAN-GO" id="Q8N3J2">
    <property type="GO annotations" value="5 GO annotations based on evolutionary models"/>
</dbReference>
<dbReference type="PhylomeDB" id="Q8N3J2"/>
<dbReference type="TreeFam" id="TF314410"/>
<dbReference type="PathwayCommons" id="Q8N3J2"/>
<dbReference type="BioGRID-ORCS" id="64863">
    <property type="hits" value="10 hits in 1117 CRISPR screens"/>
</dbReference>
<dbReference type="ChiTaRS" id="METTL4">
    <property type="organism name" value="human"/>
</dbReference>
<dbReference type="GenomeRNAi" id="64863"/>
<dbReference type="Pharos" id="Q8N3J2">
    <property type="development level" value="Tbio"/>
</dbReference>
<dbReference type="PRO" id="PR:Q8N3J2"/>
<dbReference type="Proteomes" id="UP000005640">
    <property type="component" value="Chromosome 18"/>
</dbReference>
<dbReference type="RNAct" id="Q8N3J2">
    <property type="molecule type" value="protein"/>
</dbReference>
<dbReference type="Bgee" id="ENSG00000101574">
    <property type="expression patterns" value="Expressed in ventricular zone and 144 other cell types or tissues"/>
</dbReference>
<dbReference type="ExpressionAtlas" id="Q8N3J2">
    <property type="expression patterns" value="baseline and differential"/>
</dbReference>
<dbReference type="GO" id="GO:0005829">
    <property type="term" value="C:cytosol"/>
    <property type="evidence" value="ECO:0000314"/>
    <property type="project" value="UniProtKB"/>
</dbReference>
<dbReference type="GO" id="GO:0005759">
    <property type="term" value="C:mitochondrial matrix"/>
    <property type="evidence" value="ECO:0000314"/>
    <property type="project" value="UniProtKB"/>
</dbReference>
<dbReference type="GO" id="GO:0005634">
    <property type="term" value="C:nucleus"/>
    <property type="evidence" value="ECO:0000314"/>
    <property type="project" value="UniProtKB"/>
</dbReference>
<dbReference type="GO" id="GO:1990204">
    <property type="term" value="C:oxidoreductase complex"/>
    <property type="evidence" value="ECO:0000315"/>
    <property type="project" value="FlyBase"/>
</dbReference>
<dbReference type="GO" id="GO:0036396">
    <property type="term" value="C:RNA N6-methyladenosine methyltransferase complex"/>
    <property type="evidence" value="ECO:0000315"/>
    <property type="project" value="FlyBase"/>
</dbReference>
<dbReference type="GO" id="GO:0003676">
    <property type="term" value="F:nucleic acid binding"/>
    <property type="evidence" value="ECO:0007669"/>
    <property type="project" value="InterPro"/>
</dbReference>
<dbReference type="GO" id="GO:0008173">
    <property type="term" value="F:RNA methyltransferase activity"/>
    <property type="evidence" value="ECO:0000314"/>
    <property type="project" value="UniProtKB"/>
</dbReference>
<dbReference type="GO" id="GO:0009007">
    <property type="term" value="F:site-specific DNA-methyltransferase (adenine-specific) activity"/>
    <property type="evidence" value="ECO:0000314"/>
    <property type="project" value="UniProtKB"/>
</dbReference>
<dbReference type="GO" id="GO:0106347">
    <property type="term" value="F:U2 snRNA 2'-O-methyladenosine m6 methyltransferase activity"/>
    <property type="evidence" value="ECO:0007669"/>
    <property type="project" value="RHEA"/>
</dbReference>
<dbReference type="GO" id="GO:0032259">
    <property type="term" value="P:methylation"/>
    <property type="evidence" value="ECO:0007669"/>
    <property type="project" value="UniProtKB-KW"/>
</dbReference>
<dbReference type="GO" id="GO:0045814">
    <property type="term" value="P:negative regulation of gene expression, epigenetic"/>
    <property type="evidence" value="ECO:0000250"/>
    <property type="project" value="UniProtKB"/>
</dbReference>
<dbReference type="GO" id="GO:0090296">
    <property type="term" value="P:regulation of mitochondrial DNA replication"/>
    <property type="evidence" value="ECO:0000315"/>
    <property type="project" value="UniProtKB"/>
</dbReference>
<dbReference type="GO" id="GO:1903108">
    <property type="term" value="P:regulation of mitochondrial transcription"/>
    <property type="evidence" value="ECO:0000315"/>
    <property type="project" value="UniProtKB"/>
</dbReference>
<dbReference type="GO" id="GO:0043484">
    <property type="term" value="P:regulation of RNA splicing"/>
    <property type="evidence" value="ECO:0000315"/>
    <property type="project" value="UniProtKB"/>
</dbReference>
<dbReference type="GO" id="GO:0120049">
    <property type="term" value="P:snRNA (adenine-N6)-methylation"/>
    <property type="evidence" value="ECO:0000314"/>
    <property type="project" value="UniProtKB"/>
</dbReference>
<dbReference type="InterPro" id="IPR002052">
    <property type="entry name" value="DNA_methylase_N6_adenine_CS"/>
</dbReference>
<dbReference type="InterPro" id="IPR007757">
    <property type="entry name" value="MT-A70-like"/>
</dbReference>
<dbReference type="InterPro" id="IPR029063">
    <property type="entry name" value="SAM-dependent_MTases_sf"/>
</dbReference>
<dbReference type="PANTHER" id="PTHR12829:SF4">
    <property type="entry name" value="N(6)-ADENINE-SPECIFIC METHYLTRANSFERASE METTL4"/>
    <property type="match status" value="1"/>
</dbReference>
<dbReference type="PANTHER" id="PTHR12829">
    <property type="entry name" value="N6-ADENOSINE-METHYLTRANSFERASE"/>
    <property type="match status" value="1"/>
</dbReference>
<dbReference type="Pfam" id="PF05063">
    <property type="entry name" value="MT-A70"/>
    <property type="match status" value="1"/>
</dbReference>
<dbReference type="SUPFAM" id="SSF53335">
    <property type="entry name" value="S-adenosyl-L-methionine-dependent methyltransferases"/>
    <property type="match status" value="1"/>
</dbReference>
<dbReference type="PROSITE" id="PS51143">
    <property type="entry name" value="MT_A70"/>
    <property type="match status" value="1"/>
</dbReference>
<dbReference type="PROSITE" id="PS00092">
    <property type="entry name" value="N6_MTASE"/>
    <property type="match status" value="1"/>
</dbReference>
<keyword id="KW-0156">Chromatin regulator</keyword>
<keyword id="KW-0963">Cytoplasm</keyword>
<keyword id="KW-0489">Methyltransferase</keyword>
<keyword id="KW-0496">Mitochondrion</keyword>
<keyword id="KW-0539">Nucleus</keyword>
<keyword id="KW-1267">Proteomics identification</keyword>
<keyword id="KW-1185">Reference proteome</keyword>
<keyword id="KW-0949">S-adenosyl-L-methionine</keyword>
<keyword id="KW-0808">Transferase</keyword>
<comment type="function">
    <text evidence="1 7 8 9">N(6)-adenine-specific methyltransferase that can methylate both RNAs and DNA (PubMed:31913360, PubMed:32183942). Acts as a N(6)-adenine-specific RNA methyltransferase by catalyzing formation of N6,2'-O-dimethyladenosine (m6A(m)) on internal positions of U2 small nuclear RNA (snRNA): methylates the 6th position of adenine residues with a pre-deposited 2'-O-methylation (PubMed:31913360). Internal m6A(m) methylation of snRNAs regulates RNA splicing (PubMed:31913360). Also able to act as a N(6)-adenine-specific DNA methyltransferase by mediating methylation of DNA on the 6th position of adenine (N(6)-methyladenosine) (PubMed:32183942). The existence of N(6)-methyladenosine (m6A) on DNA is however unclear in mammals, and additional evidences are required to confirm the role of the N(6)-adenine-specific DNA methyltransferase activity of METTL4 in vivo (PubMed:32203414). Acts as a regulator of mitochondrial transcript levels and mitochondrial DNA (mtDNA) copy number by mediating mtDNA N(6)-methylation: m6A on mtDNA reduces transcription by repressing TFAM DNA-binding and bending (PubMed:32183942). N(6)-methyladenosine deposition by METTL4 regulates Polycomb silencing by triggering ubiquitination and degradation of sensor proteins ASXL1 and MPND, leading to inactivation of the PR-DUB complex and subsequent preservation of Polycomb silencing (By similarity).</text>
</comment>
<comment type="catalytic activity">
    <reaction evidence="7">
        <text>a 2'-O-methyladenosine in U2 snRNA + S-adenosyl-L-methionine = an N(6)-methyl-2'-O-methyladenosine in U2 snRNA + S-adenosyl-L-homocysteine + H(+)</text>
        <dbReference type="Rhea" id="RHEA:62672"/>
        <dbReference type="Rhea" id="RHEA-COMP:16150"/>
        <dbReference type="Rhea" id="RHEA-COMP:16151"/>
        <dbReference type="ChEBI" id="CHEBI:15378"/>
        <dbReference type="ChEBI" id="CHEBI:57856"/>
        <dbReference type="ChEBI" id="CHEBI:59789"/>
        <dbReference type="ChEBI" id="CHEBI:74477"/>
        <dbReference type="ChEBI" id="CHEBI:145853"/>
    </reaction>
    <physiologicalReaction direction="left-to-right" evidence="7">
        <dbReference type="Rhea" id="RHEA:62673"/>
    </physiologicalReaction>
</comment>
<comment type="catalytic activity">
    <reaction evidence="12">
        <text>a 2'-deoxyadenosine in DNA + S-adenosyl-L-methionine = an N(6)-methyl-2'-deoxyadenosine in DNA + S-adenosyl-L-homocysteine + H(+)</text>
        <dbReference type="Rhea" id="RHEA:15197"/>
        <dbReference type="Rhea" id="RHEA-COMP:12418"/>
        <dbReference type="Rhea" id="RHEA-COMP:12419"/>
        <dbReference type="ChEBI" id="CHEBI:15378"/>
        <dbReference type="ChEBI" id="CHEBI:57856"/>
        <dbReference type="ChEBI" id="CHEBI:59789"/>
        <dbReference type="ChEBI" id="CHEBI:90615"/>
        <dbReference type="ChEBI" id="CHEBI:90616"/>
        <dbReference type="EC" id="2.1.1.72"/>
    </reaction>
    <physiologicalReaction direction="left-to-right" evidence="12">
        <dbReference type="Rhea" id="RHEA:15198"/>
    </physiologicalReaction>
</comment>
<comment type="biophysicochemical properties">
    <kinetics>
        <KM evidence="7">0.43 uM for U2 snRNA</KM>
    </kinetics>
</comment>
<comment type="subcellular location">
    <subcellularLocation>
        <location evidence="7 8">Nucleus</location>
    </subcellularLocation>
    <subcellularLocation>
        <location evidence="8">Cytoplasm</location>
        <location evidence="8">Cytosol</location>
    </subcellularLocation>
    <subcellularLocation>
        <location evidence="8">Mitochondrion matrix</location>
    </subcellularLocation>
</comment>
<comment type="similarity">
    <text evidence="2">Belongs to the MT-A70-like family.</text>
</comment>
<comment type="caution">
    <text evidence="9">The existence of N(6)-methyladenosine on DNA is unclear in mammals (PubMed:32203414). According to a report, the majority of N(6)-methyladenosine in DNA originates from RNA catabolism via a nucleotide salvage pathway and is misincorporated by DNA polymerases, arguing against a role as epigenetic DNA mark in mammalian cells (PubMed:32203414). Additional evidences are therefore required to confirm the role of METTL4 as a N(6)-adenine-specific DNA methyltransferase in vivo (PubMed:32203414).</text>
</comment>
<comment type="sequence caution" evidence="11">
    <conflict type="frameshift">
        <sequence resource="EMBL-CDS" id="BAB15520"/>
    </conflict>
</comment>
<feature type="chain" id="PRO_0000251225" description="N(6)-adenine-specific methyltransferase METTL4">
    <location>
        <begin position="1"/>
        <end position="472"/>
    </location>
</feature>
<feature type="sequence variant" id="VAR_064731" description="Found in a renal cell carcinoma sample; somatic mutation." evidence="6">
    <original>S</original>
    <variation>F</variation>
    <location>
        <position position="42"/>
    </location>
</feature>
<feature type="sequence variant" id="VAR_027670" description="In dbSNP:rs12606220.">
    <original>L</original>
    <variation>F</variation>
    <location>
        <position position="163"/>
    </location>
</feature>
<feature type="sequence variant" id="VAR_056159" description="In dbSNP:rs34143130.">
    <original>E</original>
    <variation>D</variation>
    <location>
        <position position="230"/>
    </location>
</feature>
<feature type="sequence variant" id="VAR_027671" description="In dbSNP:rs2677879." evidence="4">
    <original>Q</original>
    <variation>K</variation>
    <location>
        <position position="310"/>
    </location>
</feature>
<feature type="sequence variant" id="VAR_027672" description="In dbSNP:rs8084295." evidence="3 4 5">
    <original>V</original>
    <variation>L</variation>
    <location>
        <position position="468"/>
    </location>
</feature>
<feature type="mutagenesis site" description="Abolished methyltransferase activity." evidence="7 8">
    <original>DPPW</original>
    <variation>APPA</variation>
    <location>
        <begin position="287"/>
        <end position="290"/>
    </location>
</feature>
<feature type="sequence conflict" description="In Ref. 4; BAB15520." evidence="11" ref="4">
    <original>K</original>
    <variation>M</variation>
    <location>
        <position position="153"/>
    </location>
</feature>
<accession>Q8N3J2</accession>
<accession>B2RNA1</accession>
<accession>Q2TAA7</accession>
<accession>Q9H5U9</accession>
<protein>
    <recommendedName>
        <fullName evidence="11">N(6)-adenine-specific methyltransferase METTL4</fullName>
    </recommendedName>
    <alternativeName>
        <fullName evidence="11">Methyltransferase-like protein 4</fullName>
    </alternativeName>
    <alternativeName>
        <fullName evidence="11">N(6)-adenine-specific DNA methyltransferase METTL4</fullName>
        <ecNumber evidence="12">2.1.1.72</ecNumber>
    </alternativeName>
    <alternativeName>
        <fullName evidence="11">snRNA (2'-O-methyladenosine-N(6)-)-methyltransferase METTL4</fullName>
        <ecNumber evidence="7">2.1.1.-</ecNumber>
    </alternativeName>
</protein>
<gene>
    <name evidence="10 13" type="primary">METTL4</name>
</gene>
<name>METL4_HUMAN</name>
<organism>
    <name type="scientific">Homo sapiens</name>
    <name type="common">Human</name>
    <dbReference type="NCBI Taxonomy" id="9606"/>
    <lineage>
        <taxon>Eukaryota</taxon>
        <taxon>Metazoa</taxon>
        <taxon>Chordata</taxon>
        <taxon>Craniata</taxon>
        <taxon>Vertebrata</taxon>
        <taxon>Euteleostomi</taxon>
        <taxon>Mammalia</taxon>
        <taxon>Eutheria</taxon>
        <taxon>Euarchontoglires</taxon>
        <taxon>Primates</taxon>
        <taxon>Haplorrhini</taxon>
        <taxon>Catarrhini</taxon>
        <taxon>Hominidae</taxon>
        <taxon>Homo</taxon>
    </lineage>
</organism>
<sequence length="472" mass="54041">MSVVHQLSAGWLLDHLSFINKINYQLHQHHEPCCRKKEFTTSVHFESLQMDSVSSSGVCAAFIASDSSTKPENDDGGNYEMFTRKFVFRPELFDVTKPYITPAVHKECQQSNEKEDLMNGVKKEISISIIGKKRKRCVVFNQGELDAMEYHTKIRELILDGSLQLIQEGLKSGFLYPLFEKQDKGSKPITLPLDACSLSELCEMAKHLPSLNEMEHQTLQLVEEDTSVTEQDLFLRVVENNSSFTKVITLMGQKYLLPPKSSFLLSDISCMQPLLNYRKTFDVIVIDPPWQNKSVKRSNRYSYLSPLQIQQIPIPKLAAPNCLLVTWVTNRQKHLRFIKEELYPSWSVEVVAEWHWVKITNSGEFVFPLDSPHKKPYEGLILGRVQEKTALPLRNADVNVLPIPDHKLIVSVPCTLHSHKPPLAEVLKDYIKPDGEYLELFARNLQPGWTSWGNEVLKFQHVDYFIAVESGS</sequence>